<gene>
    <name type="primary">ystC</name>
</gene>
<name>HSTC_YEREN</name>
<evidence type="ECO:0000250" key="1"/>
<evidence type="ECO:0000269" key="2">
    <source>
    </source>
</evidence>
<evidence type="ECO:0000305" key="3"/>
<dbReference type="EMBL" id="D63578">
    <property type="protein sequence ID" value="BAA23656.1"/>
    <property type="molecule type" value="Genomic_DNA"/>
</dbReference>
<dbReference type="PIR" id="S68705">
    <property type="entry name" value="S68705"/>
</dbReference>
<dbReference type="GO" id="GO:0005615">
    <property type="term" value="C:extracellular space"/>
    <property type="evidence" value="ECO:0007669"/>
    <property type="project" value="InterPro"/>
</dbReference>
<dbReference type="GO" id="GO:0090729">
    <property type="term" value="F:toxin activity"/>
    <property type="evidence" value="ECO:0007669"/>
    <property type="project" value="UniProtKB-KW"/>
</dbReference>
<dbReference type="InterPro" id="IPR019806">
    <property type="entry name" value="Heat-stable_enterotox_CS"/>
</dbReference>
<dbReference type="InterPro" id="IPR001489">
    <property type="entry name" value="Heat-stable_enterotox_STa"/>
</dbReference>
<dbReference type="Pfam" id="PF02048">
    <property type="entry name" value="Enterotoxin_ST"/>
    <property type="match status" value="1"/>
</dbReference>
<dbReference type="PROSITE" id="PS00273">
    <property type="entry name" value="ENTEROTOXIN_H_STABLE"/>
    <property type="match status" value="1"/>
</dbReference>
<comment type="function">
    <text>Toxin which activates the particulate form of guanylate cyclase and increases cyclic GMP levels within the host intestinal epithelial cells. Highly toxic.</text>
</comment>
<comment type="subcellular location">
    <subcellularLocation>
        <location>Secreted</location>
    </subcellularLocation>
</comment>
<comment type="similarity">
    <text evidence="3">Belongs to the heat-stable enterotoxin family.</text>
</comment>
<reference key="1">
    <citation type="journal article" date="1997" name="Microb. Pathog.">
        <title>Nucleotide sequence of a gene encoding the novel Yersinia enterocolitica heat-stable enterotoxin that includes a pro-region-like sequence in its mature toxin molecule.</title>
        <authorList>
            <person name="Huang X."/>
            <person name="Yoshino K."/>
            <person name="Nakao H."/>
            <person name="Takeda T."/>
        </authorList>
    </citation>
    <scope>NUCLEOTIDE SEQUENCE [GENOMIC DNA]</scope>
    <source>
        <strain>86-11</strain>
    </source>
</reference>
<reference key="2">
    <citation type="journal article" date="1995" name="FEBS Lett.">
        <title>Characterization of a highly toxic, large molecular size heat-stable enterotoxin produced by a clinical isolate of Yersinia enterocolitica.</title>
        <authorList>
            <person name="Yoshino K."/>
            <person name="Takao T."/>
            <person name="Huang X."/>
            <person name="Murata H."/>
            <person name="Nakao H."/>
            <person name="Takeda T."/>
            <person name="Shimonishi Y."/>
        </authorList>
    </citation>
    <scope>PROTEIN SEQUENCE OF 20-72</scope>
    <source>
        <strain>Serotype O:3</strain>
    </source>
</reference>
<proteinExistence type="evidence at protein level"/>
<sequence length="72" mass="7639">MKKIVFVLTLMLFSFGTLGQETASGQVGDVSSSTIATEVSEAECGTQSATTQGENDWDWCCELCCNPACFGC</sequence>
<keyword id="KW-0903">Direct protein sequencing</keyword>
<keyword id="KW-1015">Disulfide bond</keyword>
<keyword id="KW-0260">Enterotoxin</keyword>
<keyword id="KW-0964">Secreted</keyword>
<keyword id="KW-0732">Signal</keyword>
<keyword id="KW-0800">Toxin</keyword>
<keyword id="KW-0843">Virulence</keyword>
<feature type="signal peptide" evidence="2">
    <location>
        <begin position="1"/>
        <end position="19"/>
    </location>
</feature>
<feature type="peptide" id="PRO_0000035141" description="Heat-stable enterotoxin C">
    <location>
        <begin position="20"/>
        <end position="72"/>
    </location>
</feature>
<feature type="disulfide bond" evidence="1">
    <location>
        <begin position="60"/>
        <end position="65"/>
    </location>
</feature>
<feature type="disulfide bond" evidence="1">
    <location>
        <begin position="61"/>
        <end position="69"/>
    </location>
</feature>
<feature type="disulfide bond" evidence="1">
    <location>
        <begin position="64"/>
        <end position="72"/>
    </location>
</feature>
<protein>
    <recommendedName>
        <fullName>Heat-stable enterotoxin C</fullName>
    </recommendedName>
    <alternativeName>
        <fullName>Y-STC</fullName>
    </alternativeName>
</protein>
<accession>O50319</accession>
<organism>
    <name type="scientific">Yersinia enterocolitica</name>
    <dbReference type="NCBI Taxonomy" id="630"/>
    <lineage>
        <taxon>Bacteria</taxon>
        <taxon>Pseudomonadati</taxon>
        <taxon>Pseudomonadota</taxon>
        <taxon>Gammaproteobacteria</taxon>
        <taxon>Enterobacterales</taxon>
        <taxon>Yersiniaceae</taxon>
        <taxon>Yersinia</taxon>
    </lineage>
</organism>